<protein>
    <recommendedName>
        <fullName>Hemoglobin cathodic subunit alpha</fullName>
    </recommendedName>
    <alternativeName>
        <fullName>Hemoglobin cathodic alpha chain</fullName>
        <shortName>Hb(Ca) alpha chain</shortName>
    </alternativeName>
</protein>
<evidence type="ECO:0000250" key="1"/>
<evidence type="ECO:0000255" key="2">
    <source>
        <dbReference type="PROSITE-ProRule" id="PRU00238"/>
    </source>
</evidence>
<evidence type="ECO:0000269" key="3">
    <source>
    </source>
</evidence>
<accession>P82315</accession>
<dbReference type="SMR" id="P82315"/>
<dbReference type="iPTMnet" id="P82315"/>
<dbReference type="GO" id="GO:0072562">
    <property type="term" value="C:blood microparticle"/>
    <property type="evidence" value="ECO:0007669"/>
    <property type="project" value="TreeGrafter"/>
</dbReference>
<dbReference type="GO" id="GO:0031838">
    <property type="term" value="C:haptoglobin-hemoglobin complex"/>
    <property type="evidence" value="ECO:0007669"/>
    <property type="project" value="TreeGrafter"/>
</dbReference>
<dbReference type="GO" id="GO:0005833">
    <property type="term" value="C:hemoglobin complex"/>
    <property type="evidence" value="ECO:0007669"/>
    <property type="project" value="InterPro"/>
</dbReference>
<dbReference type="GO" id="GO:0031720">
    <property type="term" value="F:haptoglobin binding"/>
    <property type="evidence" value="ECO:0007669"/>
    <property type="project" value="TreeGrafter"/>
</dbReference>
<dbReference type="GO" id="GO:0020037">
    <property type="term" value="F:heme binding"/>
    <property type="evidence" value="ECO:0007669"/>
    <property type="project" value="InterPro"/>
</dbReference>
<dbReference type="GO" id="GO:0046872">
    <property type="term" value="F:metal ion binding"/>
    <property type="evidence" value="ECO:0007669"/>
    <property type="project" value="UniProtKB-KW"/>
</dbReference>
<dbReference type="GO" id="GO:0043177">
    <property type="term" value="F:organic acid binding"/>
    <property type="evidence" value="ECO:0007669"/>
    <property type="project" value="TreeGrafter"/>
</dbReference>
<dbReference type="GO" id="GO:0019825">
    <property type="term" value="F:oxygen binding"/>
    <property type="evidence" value="ECO:0007669"/>
    <property type="project" value="InterPro"/>
</dbReference>
<dbReference type="GO" id="GO:0005344">
    <property type="term" value="F:oxygen carrier activity"/>
    <property type="evidence" value="ECO:0007669"/>
    <property type="project" value="UniProtKB-KW"/>
</dbReference>
<dbReference type="GO" id="GO:0004601">
    <property type="term" value="F:peroxidase activity"/>
    <property type="evidence" value="ECO:0007669"/>
    <property type="project" value="TreeGrafter"/>
</dbReference>
<dbReference type="GO" id="GO:0042744">
    <property type="term" value="P:hydrogen peroxide catabolic process"/>
    <property type="evidence" value="ECO:0007669"/>
    <property type="project" value="TreeGrafter"/>
</dbReference>
<dbReference type="CDD" id="cd08927">
    <property type="entry name" value="Hb-alpha-like"/>
    <property type="match status" value="1"/>
</dbReference>
<dbReference type="FunFam" id="1.10.490.10:FF:000002">
    <property type="entry name" value="Hemoglobin subunit alpha"/>
    <property type="match status" value="1"/>
</dbReference>
<dbReference type="Gene3D" id="1.10.490.10">
    <property type="entry name" value="Globins"/>
    <property type="match status" value="1"/>
</dbReference>
<dbReference type="InterPro" id="IPR000971">
    <property type="entry name" value="Globin"/>
</dbReference>
<dbReference type="InterPro" id="IPR009050">
    <property type="entry name" value="Globin-like_sf"/>
</dbReference>
<dbReference type="InterPro" id="IPR012292">
    <property type="entry name" value="Globin/Proto"/>
</dbReference>
<dbReference type="InterPro" id="IPR002338">
    <property type="entry name" value="Hemoglobin_a-typ"/>
</dbReference>
<dbReference type="InterPro" id="IPR050056">
    <property type="entry name" value="Hemoglobin_oxygen_transport"/>
</dbReference>
<dbReference type="PANTHER" id="PTHR11442:SF91">
    <property type="entry name" value="EMBRYONIC ALPHA GLOBIN E1-RELATED"/>
    <property type="match status" value="1"/>
</dbReference>
<dbReference type="PANTHER" id="PTHR11442">
    <property type="entry name" value="HEMOGLOBIN FAMILY MEMBER"/>
    <property type="match status" value="1"/>
</dbReference>
<dbReference type="Pfam" id="PF00042">
    <property type="entry name" value="Globin"/>
    <property type="match status" value="1"/>
</dbReference>
<dbReference type="PRINTS" id="PR00612">
    <property type="entry name" value="ALPHAHAEM"/>
</dbReference>
<dbReference type="SUPFAM" id="SSF46458">
    <property type="entry name" value="Globin-like"/>
    <property type="match status" value="1"/>
</dbReference>
<dbReference type="PROSITE" id="PS01033">
    <property type="entry name" value="GLOBIN"/>
    <property type="match status" value="1"/>
</dbReference>
<comment type="function">
    <text evidence="1">Involved in oxygen transport from gills to the various peripheral tissues.</text>
</comment>
<comment type="subunit">
    <text evidence="3">Heterotetramer of two alpha chains and two beta chains.</text>
</comment>
<comment type="mass spectrometry" mass="15542.0" error="0.2" method="Electrospray" evidence="3"/>
<comment type="miscellaneous">
    <text>This fish has two hemoglobins: cathodic and anodic. The cathodic Hb and anodic Hb display small and large Bohr effects respectively. In addition, the cathodic Hb displays a reverse Bohr effect and appreciable phosphate effects.</text>
</comment>
<comment type="similarity">
    <text evidence="2">Belongs to the globin family.</text>
</comment>
<sequence length="142" mass="15545">SLTAKDKALVKAFFGKIAGKADAVGHEALVRMLVVYPQTKTYFAHWPDLSPSSEEVKKHGKTIMAAVKEAVGKIDDLVGGMAQLSDLHAFKMRVDPSNFKILSHNILVTCAVHFPDDFTPEVHVSFDKFLAALSSTAADKYR</sequence>
<proteinExistence type="evidence at protein level"/>
<feature type="chain" id="PRO_0000052651" description="Hemoglobin cathodic subunit alpha">
    <location>
        <begin position="1"/>
        <end position="142"/>
    </location>
</feature>
<feature type="domain" description="Globin" evidence="2">
    <location>
        <begin position="1"/>
        <end position="142"/>
    </location>
</feature>
<feature type="binding site" evidence="2">
    <location>
        <position position="59"/>
    </location>
    <ligand>
        <name>O2</name>
        <dbReference type="ChEBI" id="CHEBI:15379"/>
    </ligand>
</feature>
<feature type="binding site" description="proximal binding residue" evidence="2">
    <location>
        <position position="88"/>
    </location>
    <ligand>
        <name>heme b</name>
        <dbReference type="ChEBI" id="CHEBI:60344"/>
    </ligand>
    <ligandPart>
        <name>Fe</name>
        <dbReference type="ChEBI" id="CHEBI:18248"/>
    </ligandPart>
</feature>
<feature type="modified residue" description="N-acetylserine" evidence="3">
    <location>
        <position position="1"/>
    </location>
</feature>
<organism>
    <name type="scientific">Hoplosternum littorale</name>
    <name type="common">Hassar</name>
    <dbReference type="NCBI Taxonomy" id="114109"/>
    <lineage>
        <taxon>Eukaryota</taxon>
        <taxon>Metazoa</taxon>
        <taxon>Chordata</taxon>
        <taxon>Craniata</taxon>
        <taxon>Vertebrata</taxon>
        <taxon>Euteleostomi</taxon>
        <taxon>Actinopterygii</taxon>
        <taxon>Neopterygii</taxon>
        <taxon>Teleostei</taxon>
        <taxon>Ostariophysi</taxon>
        <taxon>Siluriformes</taxon>
        <taxon>Callichthyidae</taxon>
        <taxon>Hoplosternum</taxon>
    </lineage>
</organism>
<name>HBAC_HOPLI</name>
<keyword id="KW-0007">Acetylation</keyword>
<keyword id="KW-0903">Direct protein sequencing</keyword>
<keyword id="KW-0349">Heme</keyword>
<keyword id="KW-0408">Iron</keyword>
<keyword id="KW-0479">Metal-binding</keyword>
<keyword id="KW-0561">Oxygen transport</keyword>
<keyword id="KW-0813">Transport</keyword>
<reference key="1">
    <citation type="journal article" date="2000" name="J. Biol. Chem.">
        <title>Isohemoglobin differentiation in the bimodal-breathing amazon catfish Hoplosternum littorale.</title>
        <authorList>
            <person name="Weber R.E."/>
            <person name="Fago A."/>
            <person name="Val A.L."/>
            <person name="Bang A."/>
            <person name="Van Hauwaert M.-L."/>
            <person name="Dewilde S."/>
            <person name="Zal F."/>
            <person name="Moens L."/>
        </authorList>
    </citation>
    <scope>PROTEIN SEQUENCE</scope>
    <scope>ACETYLATION AT SER-1</scope>
    <scope>SUBUNIT</scope>
    <scope>MASS SPECTROMETRY</scope>
    <source>
        <tissue>Blood</tissue>
    </source>
</reference>